<sequence length="340" mass="37995">MTDQLITLIWIIIKIVLILVPLLVAVAFITLAERKVIGYMQSRVGPNRVGFRGLAQPIADIFKLLLKEVIIPTASSRYLYLIAPILSLVPALAAWAVIPFAQGWVLANVNAGLLFLFAMTSLGVYGILVAGWASNSKYAFFGALRSAAQVVSYEIPMGFALVGVLLAAGTMNLQGIVLRQSGGLWHWFWLPLLPLFVTYWITAVAETNRAPFDVAEGESEIVAGFHVEYAGVTFALFFLAEYANMVLVSAIATVIFLGGWLSPFQGIPGLESLFAWVPGIVWFVLKLSLFIFTYFWMRATFPRYRYDQIMRLCWKVLIPVTLVWIIILALAIEFHWTHWL</sequence>
<gene>
    <name evidence="1" type="primary">nuoH</name>
    <name type="ordered locus">CBUD_0553</name>
</gene>
<keyword id="KW-0997">Cell inner membrane</keyword>
<keyword id="KW-1003">Cell membrane</keyword>
<keyword id="KW-0472">Membrane</keyword>
<keyword id="KW-0520">NAD</keyword>
<keyword id="KW-0874">Quinone</keyword>
<keyword id="KW-1278">Translocase</keyword>
<keyword id="KW-0812">Transmembrane</keyword>
<keyword id="KW-1133">Transmembrane helix</keyword>
<keyword id="KW-0830">Ubiquinone</keyword>
<dbReference type="EC" id="7.1.1.-" evidence="1"/>
<dbReference type="EMBL" id="CP000733">
    <property type="protein sequence ID" value="ABS76963.1"/>
    <property type="molecule type" value="Genomic_DNA"/>
</dbReference>
<dbReference type="RefSeq" id="WP_005769061.1">
    <property type="nucleotide sequence ID" value="NC_009727.1"/>
</dbReference>
<dbReference type="SMR" id="A9KBL2"/>
<dbReference type="KEGG" id="cbd:CBUD_0553"/>
<dbReference type="HOGENOM" id="CLU_015134_0_1_6"/>
<dbReference type="Proteomes" id="UP000008555">
    <property type="component" value="Chromosome"/>
</dbReference>
<dbReference type="GO" id="GO:0005886">
    <property type="term" value="C:plasma membrane"/>
    <property type="evidence" value="ECO:0007669"/>
    <property type="project" value="UniProtKB-SubCell"/>
</dbReference>
<dbReference type="GO" id="GO:0003954">
    <property type="term" value="F:NADH dehydrogenase activity"/>
    <property type="evidence" value="ECO:0007669"/>
    <property type="project" value="TreeGrafter"/>
</dbReference>
<dbReference type="GO" id="GO:0016655">
    <property type="term" value="F:oxidoreductase activity, acting on NAD(P)H, quinone or similar compound as acceptor"/>
    <property type="evidence" value="ECO:0007669"/>
    <property type="project" value="UniProtKB-UniRule"/>
</dbReference>
<dbReference type="GO" id="GO:0048038">
    <property type="term" value="F:quinone binding"/>
    <property type="evidence" value="ECO:0007669"/>
    <property type="project" value="UniProtKB-KW"/>
</dbReference>
<dbReference type="GO" id="GO:0009060">
    <property type="term" value="P:aerobic respiration"/>
    <property type="evidence" value="ECO:0007669"/>
    <property type="project" value="TreeGrafter"/>
</dbReference>
<dbReference type="HAMAP" id="MF_01350">
    <property type="entry name" value="NDH1_NuoH"/>
    <property type="match status" value="1"/>
</dbReference>
<dbReference type="InterPro" id="IPR001694">
    <property type="entry name" value="NADH_UbQ_OxRdtase_su1/FPO"/>
</dbReference>
<dbReference type="InterPro" id="IPR018086">
    <property type="entry name" value="NADH_UbQ_OxRdtase_su1_CS"/>
</dbReference>
<dbReference type="NCBIfam" id="NF004741">
    <property type="entry name" value="PRK06076.1-2"/>
    <property type="match status" value="1"/>
</dbReference>
<dbReference type="PANTHER" id="PTHR11432">
    <property type="entry name" value="NADH DEHYDROGENASE SUBUNIT 1"/>
    <property type="match status" value="1"/>
</dbReference>
<dbReference type="PANTHER" id="PTHR11432:SF3">
    <property type="entry name" value="NADH-UBIQUINONE OXIDOREDUCTASE CHAIN 1"/>
    <property type="match status" value="1"/>
</dbReference>
<dbReference type="Pfam" id="PF00146">
    <property type="entry name" value="NADHdh"/>
    <property type="match status" value="1"/>
</dbReference>
<dbReference type="PROSITE" id="PS00667">
    <property type="entry name" value="COMPLEX1_ND1_1"/>
    <property type="match status" value="1"/>
</dbReference>
<dbReference type="PROSITE" id="PS00668">
    <property type="entry name" value="COMPLEX1_ND1_2"/>
    <property type="match status" value="1"/>
</dbReference>
<protein>
    <recommendedName>
        <fullName evidence="1">NADH-quinone oxidoreductase subunit H</fullName>
        <ecNumber evidence="1">7.1.1.-</ecNumber>
    </recommendedName>
    <alternativeName>
        <fullName evidence="1">NADH dehydrogenase I subunit H</fullName>
    </alternativeName>
    <alternativeName>
        <fullName evidence="1">NDH-1 subunit H</fullName>
    </alternativeName>
</protein>
<proteinExistence type="inferred from homology"/>
<organism>
    <name type="scientific">Coxiella burnetii (strain Dugway 5J108-111)</name>
    <dbReference type="NCBI Taxonomy" id="434922"/>
    <lineage>
        <taxon>Bacteria</taxon>
        <taxon>Pseudomonadati</taxon>
        <taxon>Pseudomonadota</taxon>
        <taxon>Gammaproteobacteria</taxon>
        <taxon>Legionellales</taxon>
        <taxon>Coxiellaceae</taxon>
        <taxon>Coxiella</taxon>
    </lineage>
</organism>
<name>NUOH_COXBN</name>
<feature type="chain" id="PRO_1000086937" description="NADH-quinone oxidoreductase subunit H">
    <location>
        <begin position="1"/>
        <end position="340"/>
    </location>
</feature>
<feature type="transmembrane region" description="Helical" evidence="1">
    <location>
        <begin position="9"/>
        <end position="29"/>
    </location>
</feature>
<feature type="transmembrane region" description="Helical" evidence="1">
    <location>
        <begin position="81"/>
        <end position="101"/>
    </location>
</feature>
<feature type="transmembrane region" description="Helical" evidence="1">
    <location>
        <begin position="113"/>
        <end position="133"/>
    </location>
</feature>
<feature type="transmembrane region" description="Helical" evidence="1">
    <location>
        <begin position="158"/>
        <end position="178"/>
    </location>
</feature>
<feature type="transmembrane region" description="Helical" evidence="1">
    <location>
        <begin position="184"/>
        <end position="204"/>
    </location>
</feature>
<feature type="transmembrane region" description="Helical" evidence="1">
    <location>
        <begin position="221"/>
        <end position="240"/>
    </location>
</feature>
<feature type="transmembrane region" description="Helical" evidence="1">
    <location>
        <begin position="245"/>
        <end position="264"/>
    </location>
</feature>
<feature type="transmembrane region" description="Helical" evidence="1">
    <location>
        <begin position="273"/>
        <end position="293"/>
    </location>
</feature>
<feature type="transmembrane region" description="Helical" evidence="1">
    <location>
        <begin position="316"/>
        <end position="336"/>
    </location>
</feature>
<evidence type="ECO:0000255" key="1">
    <source>
        <dbReference type="HAMAP-Rule" id="MF_01350"/>
    </source>
</evidence>
<reference key="1">
    <citation type="journal article" date="2009" name="Infect. Immun.">
        <title>Comparative genomics reveal extensive transposon-mediated genomic plasticity and diversity among potential effector proteins within the genus Coxiella.</title>
        <authorList>
            <person name="Beare P.A."/>
            <person name="Unsworth N."/>
            <person name="Andoh M."/>
            <person name="Voth D.E."/>
            <person name="Omsland A."/>
            <person name="Gilk S.D."/>
            <person name="Williams K.P."/>
            <person name="Sobral B.W."/>
            <person name="Kupko J.J. III"/>
            <person name="Porcella S.F."/>
            <person name="Samuel J.E."/>
            <person name="Heinzen R.A."/>
        </authorList>
    </citation>
    <scope>NUCLEOTIDE SEQUENCE [LARGE SCALE GENOMIC DNA]</scope>
    <source>
        <strain>Dugway 5J108-111</strain>
    </source>
</reference>
<comment type="function">
    <text evidence="1">NDH-1 shuttles electrons from NADH, via FMN and iron-sulfur (Fe-S) centers, to quinones in the respiratory chain. The immediate electron acceptor for the enzyme in this species is believed to be ubiquinone. Couples the redox reaction to proton translocation (for every two electrons transferred, four hydrogen ions are translocated across the cytoplasmic membrane), and thus conserves the redox energy in a proton gradient. This subunit may bind ubiquinone.</text>
</comment>
<comment type="catalytic activity">
    <reaction evidence="1">
        <text>a quinone + NADH + 5 H(+)(in) = a quinol + NAD(+) + 4 H(+)(out)</text>
        <dbReference type="Rhea" id="RHEA:57888"/>
        <dbReference type="ChEBI" id="CHEBI:15378"/>
        <dbReference type="ChEBI" id="CHEBI:24646"/>
        <dbReference type="ChEBI" id="CHEBI:57540"/>
        <dbReference type="ChEBI" id="CHEBI:57945"/>
        <dbReference type="ChEBI" id="CHEBI:132124"/>
    </reaction>
</comment>
<comment type="subunit">
    <text evidence="1">NDH-1 is composed of 14 different subunits. Subunits NuoA, H, J, K, L, M, N constitute the membrane sector of the complex.</text>
</comment>
<comment type="subcellular location">
    <subcellularLocation>
        <location evidence="1">Cell inner membrane</location>
        <topology evidence="1">Multi-pass membrane protein</topology>
    </subcellularLocation>
</comment>
<comment type="similarity">
    <text evidence="1">Belongs to the complex I subunit 1 family.</text>
</comment>
<accession>A9KBL2</accession>